<keyword id="KW-0015">Albinism</keyword>
<keyword id="KW-0025">Alternative splicing</keyword>
<keyword id="KW-0175">Coiled coil</keyword>
<keyword id="KW-0963">Cytoplasm</keyword>
<keyword id="KW-0225">Disease variant</keyword>
<keyword id="KW-0363">Hermansky-Pudlak syndrome</keyword>
<keyword id="KW-0472">Membrane</keyword>
<keyword id="KW-0597">Phosphoprotein</keyword>
<keyword id="KW-1267">Proteomics identification</keyword>
<keyword id="KW-1185">Reference proteome</keyword>
<gene>
    <name type="primary">BLOC1S6</name>
    <name type="synonym">PA</name>
    <name type="synonym">PLDN</name>
</gene>
<organism>
    <name type="scientific">Homo sapiens</name>
    <name type="common">Human</name>
    <dbReference type="NCBI Taxonomy" id="9606"/>
    <lineage>
        <taxon>Eukaryota</taxon>
        <taxon>Metazoa</taxon>
        <taxon>Chordata</taxon>
        <taxon>Craniata</taxon>
        <taxon>Vertebrata</taxon>
        <taxon>Euteleostomi</taxon>
        <taxon>Mammalia</taxon>
        <taxon>Eutheria</taxon>
        <taxon>Euarchontoglires</taxon>
        <taxon>Primates</taxon>
        <taxon>Haplorrhini</taxon>
        <taxon>Catarrhini</taxon>
        <taxon>Hominidae</taxon>
        <taxon>Homo</taxon>
    </lineage>
</organism>
<protein>
    <recommendedName>
        <fullName>Biogenesis of lysosome-related organelles complex 1 subunit 6</fullName>
        <shortName>BLOC-1 subunit 6</shortName>
    </recommendedName>
    <alternativeName>
        <fullName>Pallid protein homolog</fullName>
    </alternativeName>
    <alternativeName>
        <fullName>Pallidin</fullName>
    </alternativeName>
    <alternativeName>
        <fullName>Syntaxin 13-interacting protein</fullName>
    </alternativeName>
</protein>
<reference key="1">
    <citation type="journal article" date="1999" name="Nat. Genet.">
        <title>The pallid gene encodes a novel, syntaxin 13-interacting protein involved in platelet storage pool deficiency.</title>
        <authorList>
            <person name="Huang L."/>
            <person name="Kuo Y.-M."/>
            <person name="Gitschier J."/>
        </authorList>
    </citation>
    <scope>NUCLEOTIDE SEQUENCE [MRNA] (ISOFORM 1)</scope>
    <source>
        <tissue>Brain</tissue>
    </source>
</reference>
<reference key="2">
    <citation type="journal article" date="2004" name="Nat. Genet.">
        <title>Complete sequencing and characterization of 21,243 full-length human cDNAs.</title>
        <authorList>
            <person name="Ota T."/>
            <person name="Suzuki Y."/>
            <person name="Nishikawa T."/>
            <person name="Otsuki T."/>
            <person name="Sugiyama T."/>
            <person name="Irie R."/>
            <person name="Wakamatsu A."/>
            <person name="Hayashi K."/>
            <person name="Sato H."/>
            <person name="Nagai K."/>
            <person name="Kimura K."/>
            <person name="Makita H."/>
            <person name="Sekine M."/>
            <person name="Obayashi M."/>
            <person name="Nishi T."/>
            <person name="Shibahara T."/>
            <person name="Tanaka T."/>
            <person name="Ishii S."/>
            <person name="Yamamoto J."/>
            <person name="Saito K."/>
            <person name="Kawai Y."/>
            <person name="Isono Y."/>
            <person name="Nakamura Y."/>
            <person name="Nagahari K."/>
            <person name="Murakami K."/>
            <person name="Yasuda T."/>
            <person name="Iwayanagi T."/>
            <person name="Wagatsuma M."/>
            <person name="Shiratori A."/>
            <person name="Sudo H."/>
            <person name="Hosoiri T."/>
            <person name="Kaku Y."/>
            <person name="Kodaira H."/>
            <person name="Kondo H."/>
            <person name="Sugawara M."/>
            <person name="Takahashi M."/>
            <person name="Kanda K."/>
            <person name="Yokoi T."/>
            <person name="Furuya T."/>
            <person name="Kikkawa E."/>
            <person name="Omura Y."/>
            <person name="Abe K."/>
            <person name="Kamihara K."/>
            <person name="Katsuta N."/>
            <person name="Sato K."/>
            <person name="Tanikawa M."/>
            <person name="Yamazaki M."/>
            <person name="Ninomiya K."/>
            <person name="Ishibashi T."/>
            <person name="Yamashita H."/>
            <person name="Murakawa K."/>
            <person name="Fujimori K."/>
            <person name="Tanai H."/>
            <person name="Kimata M."/>
            <person name="Watanabe M."/>
            <person name="Hiraoka S."/>
            <person name="Chiba Y."/>
            <person name="Ishida S."/>
            <person name="Ono Y."/>
            <person name="Takiguchi S."/>
            <person name="Watanabe S."/>
            <person name="Yosida M."/>
            <person name="Hotuta T."/>
            <person name="Kusano J."/>
            <person name="Kanehori K."/>
            <person name="Takahashi-Fujii A."/>
            <person name="Hara H."/>
            <person name="Tanase T.-O."/>
            <person name="Nomura Y."/>
            <person name="Togiya S."/>
            <person name="Komai F."/>
            <person name="Hara R."/>
            <person name="Takeuchi K."/>
            <person name="Arita M."/>
            <person name="Imose N."/>
            <person name="Musashino K."/>
            <person name="Yuuki H."/>
            <person name="Oshima A."/>
            <person name="Sasaki N."/>
            <person name="Aotsuka S."/>
            <person name="Yoshikawa Y."/>
            <person name="Matsunawa H."/>
            <person name="Ichihara T."/>
            <person name="Shiohata N."/>
            <person name="Sano S."/>
            <person name="Moriya S."/>
            <person name="Momiyama H."/>
            <person name="Satoh N."/>
            <person name="Takami S."/>
            <person name="Terashima Y."/>
            <person name="Suzuki O."/>
            <person name="Nakagawa S."/>
            <person name="Senoh A."/>
            <person name="Mizoguchi H."/>
            <person name="Goto Y."/>
            <person name="Shimizu F."/>
            <person name="Wakebe H."/>
            <person name="Hishigaki H."/>
            <person name="Watanabe T."/>
            <person name="Sugiyama A."/>
            <person name="Takemoto M."/>
            <person name="Kawakami B."/>
            <person name="Yamazaki M."/>
            <person name="Watanabe K."/>
            <person name="Kumagai A."/>
            <person name="Itakura S."/>
            <person name="Fukuzumi Y."/>
            <person name="Fujimori Y."/>
            <person name="Komiyama M."/>
            <person name="Tashiro H."/>
            <person name="Tanigami A."/>
            <person name="Fujiwara T."/>
            <person name="Ono T."/>
            <person name="Yamada K."/>
            <person name="Fujii Y."/>
            <person name="Ozaki K."/>
            <person name="Hirao M."/>
            <person name="Ohmori Y."/>
            <person name="Kawabata A."/>
            <person name="Hikiji T."/>
            <person name="Kobatake N."/>
            <person name="Inagaki H."/>
            <person name="Ikema Y."/>
            <person name="Okamoto S."/>
            <person name="Okitani R."/>
            <person name="Kawakami T."/>
            <person name="Noguchi S."/>
            <person name="Itoh T."/>
            <person name="Shigeta K."/>
            <person name="Senba T."/>
            <person name="Matsumura K."/>
            <person name="Nakajima Y."/>
            <person name="Mizuno T."/>
            <person name="Morinaga M."/>
            <person name="Sasaki M."/>
            <person name="Togashi T."/>
            <person name="Oyama M."/>
            <person name="Hata H."/>
            <person name="Watanabe M."/>
            <person name="Komatsu T."/>
            <person name="Mizushima-Sugano J."/>
            <person name="Satoh T."/>
            <person name="Shirai Y."/>
            <person name="Takahashi Y."/>
            <person name="Nakagawa K."/>
            <person name="Okumura K."/>
            <person name="Nagase T."/>
            <person name="Nomura N."/>
            <person name="Kikuchi H."/>
            <person name="Masuho Y."/>
            <person name="Yamashita R."/>
            <person name="Nakai K."/>
            <person name="Yada T."/>
            <person name="Nakamura Y."/>
            <person name="Ohara O."/>
            <person name="Isogai T."/>
            <person name="Sugano S."/>
        </authorList>
    </citation>
    <scope>NUCLEOTIDE SEQUENCE [LARGE SCALE MRNA] (ISOFORM 2)</scope>
    <source>
        <tissue>Thymus</tissue>
    </source>
</reference>
<reference key="3">
    <citation type="journal article" date="2004" name="Genome Res.">
        <title>The status, quality, and expansion of the NIH full-length cDNA project: the Mammalian Gene Collection (MGC).</title>
        <authorList>
            <consortium name="The MGC Project Team"/>
        </authorList>
    </citation>
    <scope>NUCLEOTIDE SEQUENCE [LARGE SCALE MRNA] (ISOFORM 1)</scope>
    <source>
        <tissue>Placenta</tissue>
    </source>
</reference>
<reference key="4">
    <citation type="journal article" date="2002" name="Pigment Cell Res.">
        <title>The pallidin (Pldn) gene and the role of SNARE proteins in melanosome biogenesis.</title>
        <authorList>
            <person name="Falcon-Perez J.M."/>
            <person name="Dell'Angelica E.C."/>
        </authorList>
    </citation>
    <scope>REVIEW</scope>
    <scope>ALTERNATIVE SPLICING</scope>
</reference>
<reference key="5">
    <citation type="journal article" date="2002" name="Traffic">
        <title>Pallidin is a component of a multi-protein complex involved in the biogenesis of lysosome-related organelles.</title>
        <authorList>
            <person name="Moriyama K."/>
            <person name="Bonifacino J.S."/>
        </authorList>
    </citation>
    <scope>TISSUE SPECIFICITY</scope>
    <scope>SUBCELLULAR LOCATION</scope>
    <scope>PHOSPHORYLATION</scope>
    <scope>INTERACTION WITH STX12 AND BLOC1S5</scope>
    <scope>HOMODIMERIZATION</scope>
</reference>
<reference key="6">
    <citation type="journal article" date="2002" name="J. Biol. Chem.">
        <title>BLOC-1, a novel complex containing the pallidin and muted proteins involved in the biogenesis of melanosomes and platelet-dense granules.</title>
        <authorList>
            <person name="Falcon-Perez J.M."/>
            <person name="Starcevic M."/>
            <person name="Gautam R."/>
            <person name="Dell'Angelica E.C."/>
        </authorList>
    </citation>
    <scope>TISSUE SPECIFICITY</scope>
    <scope>SUBCELLULAR LOCATION</scope>
    <scope>INTERACTION WITH BLOC1S5 AND F-ACTIN</scope>
    <scope>HOMODIMERIZATION</scope>
</reference>
<reference key="7">
    <citation type="journal article" date="2007" name="Mol. Biol. Cell">
        <title>BLOC-1 is required for cargo-specific sorting from vacuolar early endosomes toward lysosome-related organelles.</title>
        <authorList>
            <person name="Setty S.R."/>
            <person name="Tenza D."/>
            <person name="Truschel S.T."/>
            <person name="Chou E."/>
            <person name="Sviderskaya E.V."/>
            <person name="Theos A.C."/>
            <person name="Lamoreux M.L."/>
            <person name="Di Pietro S.M."/>
            <person name="Starcevic M."/>
            <person name="Bennett D.C."/>
            <person name="Dell'Angelica E.C."/>
            <person name="Raposo G."/>
            <person name="Marks M.S."/>
        </authorList>
    </citation>
    <scope>IDENTIFICATION IN THE BLOC-1 COMPLEX</scope>
    <scope>FUNCTION</scope>
</reference>
<reference key="8">
    <citation type="journal article" date="2010" name="Mol. Psychiatry">
        <title>The dysbindin-containing complex (BLOC-1) in brain: developmental regulation, interaction with SNARE proteins and role in neurite outgrowth.</title>
        <authorList>
            <person name="Ghiani C.A."/>
            <person name="Starcevic M."/>
            <person name="Rodriguez-Fernandez I.A."/>
            <person name="Nazarian R."/>
            <person name="Cheli V.T."/>
            <person name="Chan L.N."/>
            <person name="Malvar J.S."/>
            <person name="de Vellis J."/>
            <person name="Sabatti C."/>
            <person name="Dell'Angelica E.C."/>
        </authorList>
    </citation>
    <scope>IDENTIFICATION IN THE BLOC-1 COMPLEX</scope>
    <scope>INTERACTION WITH SNAP25; SNAP47 AND STX12</scope>
</reference>
<reference key="9">
    <citation type="journal article" date="2011" name="Am. J. Hum. Genet.">
        <title>A BLOC-1 mutation screen reveals that PLDN is mutated in Hermansky-Pudlak Syndrome type 9.</title>
        <authorList>
            <person name="Cullinane A.R."/>
            <person name="Curry J.A."/>
            <person name="Carmona-Rivera C."/>
            <person name="Summers C.G."/>
            <person name="Ciccone C."/>
            <person name="Cardillo N.D."/>
            <person name="Dorward H."/>
            <person name="Hess R.A."/>
            <person name="White J.G."/>
            <person name="Adams D."/>
            <person name="Huizing M."/>
            <person name="Gahl W.A."/>
        </authorList>
    </citation>
    <scope>RETRACTED PAPER</scope>
</reference>
<reference key="10">
    <citation type="journal article" date="2017" name="Am. J. Hum. Genet.">
        <title>Retraction Notice to: A BLOC-1 Mutation Screen Reveals that PLDN Is Mutated in Hermansky-Pudlak Syndrome Type 9.</title>
        <authorList>
            <person name="Cullinane A.R."/>
            <person name="Curry J.A."/>
            <person name="Carmona-Rivera C."/>
            <person name="Summers C.G."/>
            <person name="Ciccone C."/>
            <person name="Cardillo N.D."/>
            <person name="Dorward H."/>
            <person name="Hess R.A."/>
            <person name="White J.G."/>
            <person name="Adams D."/>
            <person name="Huizing M."/>
            <person name="Gahl W.A."/>
        </authorList>
    </citation>
    <scope>RETRACTION NOTICE OF PUBMED:21665000</scope>
</reference>
<reference key="11">
    <citation type="journal article" date="2011" name="Mol. Biol. Cell">
        <title>The schizophrenia susceptibility factor dysbindin and its associated complex sort cargoes from cell bodies to the synapse.</title>
        <authorList>
            <person name="Larimore J."/>
            <person name="Tornieri K."/>
            <person name="Ryder P.V."/>
            <person name="Gokhale A."/>
            <person name="Zlatic S.A."/>
            <person name="Craige B."/>
            <person name="Lee J.D."/>
            <person name="Talbot K."/>
            <person name="Pare J.F."/>
            <person name="Smith Y."/>
            <person name="Faundez V."/>
        </authorList>
    </citation>
    <scope>FUNCTION</scope>
    <scope>ASSOCIATION WITH THE AP-3 COMPLEX</scope>
    <scope>INTERACTION WITH BLOC1S5</scope>
</reference>
<reference key="12">
    <citation type="journal article" date="2012" name="Blood">
        <title>Exome sequencing reveals a pallidin mutation in a Hermansky-Pudlak-like primary immunodeficiency syndrome.</title>
        <authorList>
            <person name="Badolato R."/>
            <person name="Prandini A."/>
            <person name="Caracciolo S."/>
            <person name="Colombo F."/>
            <person name="Tabellini G."/>
            <person name="Giacomelli M."/>
            <person name="Cantarini M.E."/>
            <person name="Pession A."/>
            <person name="Bell C.J."/>
            <person name="Dinwiddie D.L."/>
            <person name="Miller N.A."/>
            <person name="Hateley S.L."/>
            <person name="Saunders C.J."/>
            <person name="Zhang L."/>
            <person name="Schroth G.P."/>
            <person name="Plebani A."/>
            <person name="Parolini S."/>
            <person name="Kingsmore S.F."/>
        </authorList>
    </citation>
    <scope>INVOLVEMENT IN HPS9</scope>
    <scope>VARIANT HPS9 78-GLN--MET-172 DEL</scope>
    <scope>CHARACTERIZATION OF VARIANT HPS9 78-GLN--MET-172 DEL</scope>
</reference>
<reference key="13">
    <citation type="journal article" date="2012" name="J. Biol. Chem.">
        <title>Assembly and architecture of biogenesis of lysosome-related organelles complex-1 (BLOC-1).</title>
        <authorList>
            <person name="Lee H.H."/>
            <person name="Nemecek D."/>
            <person name="Schindler C."/>
            <person name="Smith W.J."/>
            <person name="Ghirlando R."/>
            <person name="Steven A.C."/>
            <person name="Bonifacino J.S."/>
            <person name="Hurley J.H."/>
        </authorList>
    </citation>
    <scope>IDENTIFICATION IN THE BLOC-1 COMPLEX</scope>
    <scope>COMPOSITION OF THE BLOC-1 COMPLEX</scope>
</reference>
<reference key="14">
    <citation type="journal article" date="2014" name="J. Proteomics">
        <title>An enzyme assisted RP-RPLC approach for in-depth analysis of human liver phosphoproteome.</title>
        <authorList>
            <person name="Bian Y."/>
            <person name="Song C."/>
            <person name="Cheng K."/>
            <person name="Dong M."/>
            <person name="Wang F."/>
            <person name="Huang J."/>
            <person name="Sun D."/>
            <person name="Wang L."/>
            <person name="Ye M."/>
            <person name="Zou H."/>
        </authorList>
    </citation>
    <scope>IDENTIFICATION BY MASS SPECTROMETRY [LARGE SCALE ANALYSIS]</scope>
    <source>
        <tissue>Liver</tissue>
    </source>
</reference>
<sequence>MSVPGPSSPDGALTRPPYCLEAGEPTPGLSDTSPDEGLIEDLTIEDKAVEQLAEGLLSHYLPDLQRSKQALQELTQNQVVLLDTLEQEISKFKECHSMLDINALFAEAKHYHAKLVNIRKEMLMLHEKTSKLKKRALKLQQKRQKEELEREQQREKEFEREKQLTARPAKRM</sequence>
<feature type="chain" id="PRO_0000058458" description="Biogenesis of lysosome-related organelles complex 1 subunit 6">
    <location>
        <begin position="1"/>
        <end position="172"/>
    </location>
</feature>
<feature type="region of interest" description="Disordered" evidence="3">
    <location>
        <begin position="1"/>
        <end position="36"/>
    </location>
</feature>
<feature type="region of interest" description="Disordered" evidence="3">
    <location>
        <begin position="135"/>
        <end position="172"/>
    </location>
</feature>
<feature type="coiled-coil region" evidence="2">
    <location>
        <begin position="63"/>
        <end position="167"/>
    </location>
</feature>
<feature type="compositionally biased region" description="Basic and acidic residues" evidence="3">
    <location>
        <begin position="143"/>
        <end position="164"/>
    </location>
</feature>
<feature type="splice variant" id="VSP_009293" description="In isoform 2." evidence="12">
    <original>QNQVV</original>
    <variation>TKLYC</variation>
    <location>
        <begin position="76"/>
        <end position="80"/>
    </location>
</feature>
<feature type="splice variant" id="VSP_009294" description="In isoform 2." evidence="12">
    <location>
        <begin position="81"/>
        <end position="172"/>
    </location>
</feature>
<feature type="sequence variant" id="VAR_081117" description="In HPS9; reduces NK cell cytolytic activity; increases LAMP1/CD107A and CD63 levels at the cell membrane." evidence="11">
    <location>
        <begin position="78"/>
        <end position="172"/>
    </location>
</feature>
<accession>Q9UL45</accession>
<evidence type="ECO:0000250" key="1"/>
<evidence type="ECO:0000255" key="2"/>
<evidence type="ECO:0000256" key="3">
    <source>
        <dbReference type="SAM" id="MobiDB-lite"/>
    </source>
</evidence>
<evidence type="ECO:0000269" key="4">
    <source>
    </source>
</evidence>
<evidence type="ECO:0000269" key="5">
    <source>
    </source>
</evidence>
<evidence type="ECO:0000269" key="6">
    <source>
    </source>
</evidence>
<evidence type="ECO:0000269" key="7">
    <source>
    </source>
</evidence>
<evidence type="ECO:0000269" key="8">
    <source>
    </source>
</evidence>
<evidence type="ECO:0000269" key="9">
    <source>
    </source>
</evidence>
<evidence type="ECO:0000269" key="10">
    <source>
    </source>
</evidence>
<evidence type="ECO:0000269" key="11">
    <source>
    </source>
</evidence>
<evidence type="ECO:0000303" key="12">
    <source>
    </source>
</evidence>
<evidence type="ECO:0000305" key="13"/>
<evidence type="ECO:0000305" key="14">
    <source>
    </source>
</evidence>
<proteinExistence type="evidence at protein level"/>
<comment type="function">
    <text evidence="6 9">Component of the BLOC-1 complex, a complex that is required for normal biogenesis of lysosome-related organelles (LRO), such as platelet dense granules and melanosomes. In concert with the AP-3 complex, the BLOC-1 complex is required to target membrane protein cargos into vesicles assembled at cell bodies for delivery into neurites and nerve terminals. The BLOC-1 complex, in association with SNARE proteins, is also proposed to be involved in neurite extension. May play a role in intracellular vesicle trafficking, particularly in the vesicle-docking and fusion process.</text>
</comment>
<comment type="subunit">
    <text evidence="1 4 5 6 7 9 10">Interacts with BLOC1S4 and DTNBP1/BLOC1S7 (By similarity). Homodimer. Component of the biogenesis of lysosome-related organelles complex 1 (BLOC-1) composed of BLOC1S1, BLOC1S2, BLOC1S3, BLOC1S4, BLOC1S5, BLOC1S6, DTNBP1/BLOC1S7 and SNAPIN/BLOC1S8. Octamer composed of one copy each BLOC1S1, BLOC1S2, BLOC1S3, BLOC1S4, BLOC1S5, BLOC1S6, DTNBP1/BLOC1S7 and SNAPIN/BLOC1S8. The BLOC-1 complex associates with the AP-3 protein complex and membrane protein cargos. Interacts with BLOC1S5, F-actin, SNAP25 isoform 1 and isoform 2, SNAP47 and STX12.</text>
</comment>
<comment type="interaction">
    <interactant intactId="EBI-465781">
        <id>Q9UL45</id>
    </interactant>
    <interactant intactId="EBI-743598">
        <id>Q9NYB9</id>
        <label>ABI2</label>
    </interactant>
    <organismsDiffer>false</organismsDiffer>
    <experiments>5</experiments>
</comment>
<comment type="interaction">
    <interactant intactId="EBI-465781">
        <id>Q9UL45</id>
    </interactant>
    <interactant intactId="EBI-11096309">
        <id>Q9NYB9-2</id>
        <label>ABI2</label>
    </interactant>
    <organismsDiffer>false</organismsDiffer>
    <experiments>6</experiments>
</comment>
<comment type="interaction">
    <interactant intactId="EBI-465781">
        <id>Q9UL45</id>
    </interactant>
    <interactant intactId="EBI-747899">
        <id>Q8N302</id>
        <label>AGGF1</label>
    </interactant>
    <organismsDiffer>false</organismsDiffer>
    <experiments>3</experiments>
</comment>
<comment type="interaction">
    <interactant intactId="EBI-465781">
        <id>Q9UL45</id>
    </interactant>
    <interactant intactId="EBI-348630">
        <id>P78537</id>
        <label>BLOC1S1</label>
    </interactant>
    <organismsDiffer>false</organismsDiffer>
    <experiments>20</experiments>
</comment>
<comment type="interaction">
    <interactant intactId="EBI-465781">
        <id>Q9UL45</id>
    </interactant>
    <interactant intactId="EBI-465852">
        <id>Q9NUP1</id>
        <label>BLOC1S4</label>
    </interactant>
    <organismsDiffer>false</organismsDiffer>
    <experiments>8</experiments>
</comment>
<comment type="interaction">
    <interactant intactId="EBI-465781">
        <id>Q9UL45</id>
    </interactant>
    <interactant intactId="EBI-465781">
        <id>Q9UL45</id>
        <label>BLOC1S6</label>
    </interactant>
    <organismsDiffer>false</organismsDiffer>
    <experiments>3</experiments>
</comment>
<comment type="interaction">
    <interactant intactId="EBI-465781">
        <id>Q9UL45</id>
    </interactant>
    <interactant intactId="EBI-6657981">
        <id>Q504U0</id>
        <label>C4orf46</label>
    </interactant>
    <organismsDiffer>false</organismsDiffer>
    <experiments>3</experiments>
</comment>
<comment type="interaction">
    <interactant intactId="EBI-465781">
        <id>Q9UL45</id>
    </interactant>
    <interactant intactId="EBI-10171416">
        <id>Q96JN2-2</id>
        <label>CCDC136</label>
    </interactant>
    <organismsDiffer>false</organismsDiffer>
    <experiments>3</experiments>
</comment>
<comment type="interaction">
    <interactant intactId="EBI-465781">
        <id>Q9UL45</id>
    </interactant>
    <interactant intactId="EBI-10175300">
        <id>Q8TD31-3</id>
        <label>CCHCR1</label>
    </interactant>
    <organismsDiffer>false</organismsDiffer>
    <experiments>3</experiments>
</comment>
<comment type="interaction">
    <interactant intactId="EBI-465781">
        <id>Q9UL45</id>
    </interactant>
    <interactant intactId="EBI-10266998">
        <id>Q8N619</id>
        <label>CDK5R1</label>
    </interactant>
    <organismsDiffer>false</organismsDiffer>
    <experiments>3</experiments>
</comment>
<comment type="interaction">
    <interactant intactId="EBI-465781">
        <id>Q9UL45</id>
    </interactant>
    <interactant intactId="EBI-744115">
        <id>Q9C0F1</id>
        <label>CEP44</label>
    </interactant>
    <organismsDiffer>false</organismsDiffer>
    <experiments>5</experiments>
</comment>
<comment type="interaction">
    <interactant intactId="EBI-465781">
        <id>Q9UL45</id>
    </interactant>
    <interactant intactId="EBI-10254194">
        <id>Q6QEF8</id>
        <label>CORO6</label>
    </interactant>
    <organismsDiffer>false</organismsDiffer>
    <experiments>3</experiments>
</comment>
<comment type="interaction">
    <interactant intactId="EBI-465781">
        <id>Q9UL45</id>
    </interactant>
    <interactant intactId="EBI-715074">
        <id>Q13561</id>
        <label>DCTN2</label>
    </interactant>
    <organismsDiffer>false</organismsDiffer>
    <experiments>3</experiments>
</comment>
<comment type="interaction">
    <interactant intactId="EBI-465781">
        <id>Q9UL45</id>
    </interactant>
    <interactant intactId="EBI-465804">
        <id>Q96EV8</id>
        <label>DTNBP1</label>
    </interactant>
    <organismsDiffer>false</organismsDiffer>
    <experiments>12</experiments>
</comment>
<comment type="interaction">
    <interactant intactId="EBI-465781">
        <id>Q9UL45</id>
    </interactant>
    <interactant intactId="EBI-742102">
        <id>Q8IYI6</id>
        <label>EXOC8</label>
    </interactant>
    <organismsDiffer>false</organismsDiffer>
    <experiments>4</experiments>
</comment>
<comment type="interaction">
    <interactant intactId="EBI-465781">
        <id>Q9UL45</id>
    </interactant>
    <interactant intactId="EBI-2514791">
        <id>Q96CS2</id>
        <label>HAUS1</label>
    </interactant>
    <organismsDiffer>false</organismsDiffer>
    <experiments>3</experiments>
</comment>
<comment type="interaction">
    <interactant intactId="EBI-465781">
        <id>Q9UL45</id>
    </interactant>
    <interactant intactId="EBI-9091197">
        <id>Q8IY31-3</id>
        <label>IFT20</label>
    </interactant>
    <organismsDiffer>false</organismsDiffer>
    <experiments>3</experiments>
</comment>
<comment type="interaction">
    <interactant intactId="EBI-465781">
        <id>Q9UL45</id>
    </interactant>
    <interactant intactId="EBI-4311436">
        <id>Q2T9L4</id>
        <label>INSYN1</label>
    </interactant>
    <organismsDiffer>false</organismsDiffer>
    <experiments>7</experiments>
</comment>
<comment type="interaction">
    <interactant intactId="EBI-465781">
        <id>Q9UL45</id>
    </interactant>
    <interactant intactId="EBI-10171552">
        <id>A1A4E9</id>
        <label>KRT13</label>
    </interactant>
    <organismsDiffer>false</organismsDiffer>
    <experiments>3</experiments>
</comment>
<comment type="interaction">
    <interactant intactId="EBI-465781">
        <id>Q9UL45</id>
    </interactant>
    <interactant intactId="EBI-1221280">
        <id>Q14CN4</id>
        <label>KRT72</label>
    </interactant>
    <organismsDiffer>false</organismsDiffer>
    <experiments>3</experiments>
</comment>
<comment type="interaction">
    <interactant intactId="EBI-465781">
        <id>Q9UL45</id>
    </interactant>
    <interactant intactId="EBI-394678">
        <id>Q13503</id>
        <label>MED21</label>
    </interactant>
    <organismsDiffer>false</organismsDiffer>
    <experiments>3</experiments>
</comment>
<comment type="interaction">
    <interactant intactId="EBI-465781">
        <id>Q9UL45</id>
    </interactant>
    <interactant intactId="EBI-7042162">
        <id>Q9BV36</id>
        <label>MLPH</label>
    </interactant>
    <organismsDiffer>false</organismsDiffer>
    <experiments>3</experiments>
</comment>
<comment type="interaction">
    <interactant intactId="EBI-465781">
        <id>Q9UL45</id>
    </interactant>
    <interactant intactId="EBI-347978">
        <id>P37198</id>
        <label>NUP62</label>
    </interactant>
    <organismsDiffer>false</organismsDiffer>
    <experiments>6</experiments>
</comment>
<comment type="interaction">
    <interactant intactId="EBI-465781">
        <id>Q9UL45</id>
    </interactant>
    <interactant intactId="EBI-742388">
        <id>Q9H8W4</id>
        <label>PLEKHF2</label>
    </interactant>
    <organismsDiffer>false</organismsDiffer>
    <experiments>4</experiments>
</comment>
<comment type="interaction">
    <interactant intactId="EBI-465781">
        <id>Q9UL45</id>
    </interactant>
    <interactant intactId="EBI-913954">
        <id>Q9UJ41</id>
        <label>RABGEF1</label>
    </interactant>
    <organismsDiffer>false</organismsDiffer>
    <experiments>3</experiments>
</comment>
<comment type="interaction">
    <interactant intactId="EBI-465781">
        <id>Q9UL45</id>
    </interactant>
    <interactant intactId="EBI-14093916">
        <id>Q9UJ41-4</id>
        <label>RABGEF1</label>
    </interactant>
    <organismsDiffer>false</organismsDiffer>
    <experiments>6</experiments>
</comment>
<comment type="interaction">
    <interactant intactId="EBI-465781">
        <id>Q9UL45</id>
    </interactant>
    <interactant intactId="EBI-726876">
        <id>Q6NUQ1</id>
        <label>RINT1</label>
    </interactant>
    <organismsDiffer>false</organismsDiffer>
    <experiments>3</experiments>
</comment>
<comment type="interaction">
    <interactant intactId="EBI-465781">
        <id>Q9UL45</id>
    </interactant>
    <interactant intactId="EBI-741854">
        <id>Q96BD8</id>
        <label>SKA1</label>
    </interactant>
    <organismsDiffer>false</organismsDiffer>
    <experiments>9</experiments>
</comment>
<comment type="interaction">
    <interactant intactId="EBI-465781">
        <id>Q9UL45</id>
    </interactant>
    <interactant intactId="EBI-395421">
        <id>Q16637</id>
        <label>SMN2</label>
    </interactant>
    <organismsDiffer>false</organismsDiffer>
    <experiments>6</experiments>
</comment>
<comment type="interaction">
    <interactant intactId="EBI-465781">
        <id>Q9UL45</id>
    </interactant>
    <interactant intactId="EBI-714135">
        <id>O75558</id>
        <label>STX11</label>
    </interactant>
    <organismsDiffer>false</organismsDiffer>
    <experiments>6</experiments>
</comment>
<comment type="interaction">
    <interactant intactId="EBI-465781">
        <id>Q9UL45</id>
    </interactant>
    <interactant intactId="EBI-712466">
        <id>Q16623</id>
        <label>STX1A</label>
    </interactant>
    <organismsDiffer>false</organismsDiffer>
    <experiments>3</experiments>
</comment>
<comment type="interaction">
    <interactant intactId="EBI-465781">
        <id>Q9UL45</id>
    </interactant>
    <interactant intactId="EBI-10283466">
        <id>A1L190</id>
        <label>SYCE3</label>
    </interactant>
    <organismsDiffer>false</organismsDiffer>
    <experiments>3</experiments>
</comment>
<comment type="interaction">
    <interactant intactId="EBI-465781">
        <id>Q9UL45</id>
    </interactant>
    <interactant intactId="EBI-12123928">
        <id>P09493-10</id>
        <label>TPM1</label>
    </interactant>
    <organismsDiffer>false</organismsDiffer>
    <experiments>5</experiments>
</comment>
<comment type="interaction">
    <interactant intactId="EBI-465781">
        <id>Q9UL45</id>
    </interactant>
    <interactant intactId="EBI-10184033">
        <id>Q5VU62</id>
        <label>TPM3</label>
    </interactant>
    <organismsDiffer>false</organismsDiffer>
    <experiments>3</experiments>
</comment>
<comment type="interaction">
    <interactant intactId="EBI-465781">
        <id>Q9UL45</id>
    </interactant>
    <interactant intactId="EBI-712969">
        <id>Q9Y3C0</id>
        <label>WASHC3</label>
    </interactant>
    <organismsDiffer>false</organismsDiffer>
    <experiments>10</experiments>
</comment>
<comment type="subcellular location">
    <subcellularLocation>
        <location evidence="4 5">Cytoplasm</location>
    </subcellularLocation>
    <subcellularLocation>
        <location evidence="4 5">Membrane</location>
        <topology evidence="4">Peripheral membrane protein</topology>
    </subcellularLocation>
    <text evidence="4">It can exist as a soluble protein as well as a peripheral membrane protein (PubMed:12019270).</text>
</comment>
<comment type="alternative products">
    <event type="alternative splicing"/>
    <isoform>
        <id>Q9UL45-1</id>
        <name>1</name>
        <sequence type="displayed"/>
    </isoform>
    <isoform>
        <id>Q9UL45-2</id>
        <name>2</name>
        <sequence type="described" ref="VSP_009293 VSP_009294"/>
    </isoform>
    <isoform>
        <id>Q9UL45-3</id>
        <name>3</name>
        <sequence type="not described"/>
    </isoform>
</comment>
<comment type="tissue specificity">
    <text evidence="4 5">Widely expressed.</text>
</comment>
<comment type="PTM">
    <text evidence="5">Phosphorylated.</text>
</comment>
<comment type="disease" evidence="11">
    <disease id="DI-03187">
        <name>Hermansky-Pudlak syndrome 9</name>
        <acronym>HPS9</acronym>
        <description>A form of Hermansky-Pudlak syndrome, a genetically heterogeneous autosomal recessive disorder characterized by oculocutaneous albinism, bleeding due to platelet storage pool deficiency, and lysosomal storage defects. This syndrome results from defects of diverse cytoplasmic organelles including melanosomes, platelet dense granules and lysosomes. Ceroid storage in the lungs is associated with pulmonary fibrosis, a common cause of premature death in individuals with HPS.</description>
        <dbReference type="MIM" id="614171"/>
    </disease>
    <text>The disease is caused by variants affecting the gene represented in this entry.</text>
</comment>
<comment type="miscellaneous">
    <molecule>Isoform 2</molecule>
    <text evidence="13">May be due to a competing acceptor splice site.</text>
</comment>
<comment type="miscellaneous">
    <molecule>Isoform 3</molecule>
    <text evidence="13">May be due to exons 2 and 3 skipping.</text>
</comment>
<comment type="similarity">
    <text evidence="13">Belongs to the BLOC1S6 family.</text>
</comment>
<comment type="caution">
    <text evidence="8 14">A paper showing involvement in Hermansky-Pudlak syndrome 9 was retracted due to image duplication.</text>
</comment>
<name>BL1S6_HUMAN</name>
<dbReference type="EMBL" id="AF080470">
    <property type="protein sequence ID" value="AAF08343.1"/>
    <property type="molecule type" value="mRNA"/>
</dbReference>
<dbReference type="EMBL" id="AK057545">
    <property type="status" value="NOT_ANNOTATED_CDS"/>
    <property type="molecule type" value="mRNA"/>
</dbReference>
<dbReference type="EMBL" id="BC004819">
    <property type="protein sequence ID" value="AAH04819.1"/>
    <property type="molecule type" value="mRNA"/>
</dbReference>
<dbReference type="CCDS" id="CCDS10126.1">
    <molecule id="Q9UL45-1"/>
</dbReference>
<dbReference type="RefSeq" id="NP_036520.1">
    <molecule id="Q9UL45-1"/>
    <property type="nucleotide sequence ID" value="NM_012388.4"/>
</dbReference>
<dbReference type="SMR" id="Q9UL45"/>
<dbReference type="BioGRID" id="117644">
    <property type="interactions" value="80"/>
</dbReference>
<dbReference type="ComplexPortal" id="CPX-1910">
    <property type="entry name" value="BLOC-1 complex"/>
</dbReference>
<dbReference type="CORUM" id="Q9UL45"/>
<dbReference type="FunCoup" id="Q9UL45">
    <property type="interactions" value="2272"/>
</dbReference>
<dbReference type="IntAct" id="Q9UL45">
    <property type="interactions" value="69"/>
</dbReference>
<dbReference type="MINT" id="Q9UL45"/>
<dbReference type="STRING" id="9606.ENSP00000456851"/>
<dbReference type="GlyGen" id="Q9UL45">
    <property type="glycosylation" value="1 site"/>
</dbReference>
<dbReference type="iPTMnet" id="Q9UL45"/>
<dbReference type="PhosphoSitePlus" id="Q9UL45"/>
<dbReference type="BioMuta" id="BLOC1S6"/>
<dbReference type="DMDM" id="41017511"/>
<dbReference type="jPOST" id="Q9UL45"/>
<dbReference type="MassIVE" id="Q9UL45"/>
<dbReference type="PaxDb" id="9606-ENSP00000220531"/>
<dbReference type="PeptideAtlas" id="Q9UL45"/>
<dbReference type="ProteomicsDB" id="84945">
    <molecule id="Q9UL45-1"/>
</dbReference>
<dbReference type="ProteomicsDB" id="84946">
    <molecule id="Q9UL45-2"/>
</dbReference>
<dbReference type="Pumba" id="Q9UL45"/>
<dbReference type="Antibodypedia" id="24448">
    <property type="antibodies" value="220 antibodies from 30 providers"/>
</dbReference>
<dbReference type="DNASU" id="26258"/>
<dbReference type="Ensembl" id="ENST00000220531.9">
    <molecule id="Q9UL45-1"/>
    <property type="protein sequence ID" value="ENSP00000220531.4"/>
    <property type="gene ID" value="ENSG00000104164.12"/>
</dbReference>
<dbReference type="Ensembl" id="ENST00000567523.5">
    <molecule id="Q9UL45-2"/>
    <property type="protein sequence ID" value="ENSP00000456624.1"/>
    <property type="gene ID" value="ENSG00000104164.12"/>
</dbReference>
<dbReference type="GeneID" id="26258"/>
<dbReference type="KEGG" id="hsa:26258"/>
<dbReference type="MANE-Select" id="ENST00000220531.9">
    <property type="protein sequence ID" value="ENSP00000220531.4"/>
    <property type="RefSeq nucleotide sequence ID" value="NM_012388.4"/>
    <property type="RefSeq protein sequence ID" value="NP_036520.1"/>
</dbReference>
<dbReference type="UCSC" id="uc001zvq.4">
    <molecule id="Q9UL45-1"/>
    <property type="organism name" value="human"/>
</dbReference>
<dbReference type="AGR" id="HGNC:8549"/>
<dbReference type="CTD" id="26258"/>
<dbReference type="DisGeNET" id="26258"/>
<dbReference type="GeneCards" id="BLOC1S6"/>
<dbReference type="GeneReviews" id="BLOC1S6"/>
<dbReference type="HGNC" id="HGNC:8549">
    <property type="gene designation" value="BLOC1S6"/>
</dbReference>
<dbReference type="HPA" id="ENSG00000104164">
    <property type="expression patterns" value="Low tissue specificity"/>
</dbReference>
<dbReference type="MalaCards" id="BLOC1S6"/>
<dbReference type="MIM" id="604310">
    <property type="type" value="gene"/>
</dbReference>
<dbReference type="MIM" id="614171">
    <property type="type" value="phenotype"/>
</dbReference>
<dbReference type="neXtProt" id="NX_Q9UL45"/>
<dbReference type="OpenTargets" id="ENSG00000104164"/>
<dbReference type="Orphanet" id="231531">
    <property type="disease" value="Hermansky-Pudlak syndrome due to BLOC-1 deficiency"/>
</dbReference>
<dbReference type="PharmGKB" id="PA33398"/>
<dbReference type="VEuPathDB" id="HostDB:ENSG00000104164"/>
<dbReference type="eggNOG" id="ENOG502RZNC">
    <property type="taxonomic scope" value="Eukaryota"/>
</dbReference>
<dbReference type="GeneTree" id="ENSGT00510000047812"/>
<dbReference type="HOGENOM" id="CLU_115118_1_0_1"/>
<dbReference type="InParanoid" id="Q9UL45"/>
<dbReference type="OMA" id="MMSDVKR"/>
<dbReference type="OrthoDB" id="19659at2759"/>
<dbReference type="PAN-GO" id="Q9UL45">
    <property type="GO annotations" value="4 GO annotations based on evolutionary models"/>
</dbReference>
<dbReference type="PhylomeDB" id="Q9UL45"/>
<dbReference type="TreeFam" id="TF325188"/>
<dbReference type="PathwayCommons" id="Q9UL45"/>
<dbReference type="Reactome" id="R-HSA-432722">
    <property type="pathway name" value="Golgi Associated Vesicle Biogenesis"/>
</dbReference>
<dbReference type="SignaLink" id="Q9UL45"/>
<dbReference type="SIGNOR" id="Q9UL45"/>
<dbReference type="BioGRID-ORCS" id="26258">
    <property type="hits" value="26 hits in 1159 CRISPR screens"/>
</dbReference>
<dbReference type="ChiTaRS" id="BLOC1S6">
    <property type="organism name" value="human"/>
</dbReference>
<dbReference type="GeneWiki" id="PLDN"/>
<dbReference type="GenomeRNAi" id="26258"/>
<dbReference type="Pharos" id="Q9UL45">
    <property type="development level" value="Tbio"/>
</dbReference>
<dbReference type="PRO" id="PR:Q9UL45"/>
<dbReference type="Proteomes" id="UP000005640">
    <property type="component" value="Chromosome 15"/>
</dbReference>
<dbReference type="RNAct" id="Q9UL45">
    <property type="molecule type" value="protein"/>
</dbReference>
<dbReference type="Bgee" id="ENSG00000104164">
    <property type="expression patterns" value="Expressed in epithelial cell of pancreas and 196 other cell types or tissues"/>
</dbReference>
<dbReference type="ExpressionAtlas" id="Q9UL45">
    <property type="expression patterns" value="baseline and differential"/>
</dbReference>
<dbReference type="GO" id="GO:1904115">
    <property type="term" value="C:axon cytoplasm"/>
    <property type="evidence" value="ECO:0007669"/>
    <property type="project" value="GOC"/>
</dbReference>
<dbReference type="GO" id="GO:0031083">
    <property type="term" value="C:BLOC-1 complex"/>
    <property type="evidence" value="ECO:0000314"/>
    <property type="project" value="UniProtKB"/>
</dbReference>
<dbReference type="GO" id="GO:0044291">
    <property type="term" value="C:cell-cell contact zone"/>
    <property type="evidence" value="ECO:0007669"/>
    <property type="project" value="Ensembl"/>
</dbReference>
<dbReference type="GO" id="GO:0070938">
    <property type="term" value="C:contractile ring"/>
    <property type="evidence" value="ECO:0007669"/>
    <property type="project" value="Ensembl"/>
</dbReference>
<dbReference type="GO" id="GO:0005737">
    <property type="term" value="C:cytoplasm"/>
    <property type="evidence" value="ECO:0000314"/>
    <property type="project" value="UniProtKB"/>
</dbReference>
<dbReference type="GO" id="GO:0005829">
    <property type="term" value="C:cytosol"/>
    <property type="evidence" value="ECO:0000304"/>
    <property type="project" value="Reactome"/>
</dbReference>
<dbReference type="GO" id="GO:0005768">
    <property type="term" value="C:endosome"/>
    <property type="evidence" value="ECO:0007669"/>
    <property type="project" value="Ensembl"/>
</dbReference>
<dbReference type="GO" id="GO:0031941">
    <property type="term" value="C:filamentous actin"/>
    <property type="evidence" value="ECO:0007669"/>
    <property type="project" value="Ensembl"/>
</dbReference>
<dbReference type="GO" id="GO:0005925">
    <property type="term" value="C:focal adhesion"/>
    <property type="evidence" value="ECO:0007669"/>
    <property type="project" value="Ensembl"/>
</dbReference>
<dbReference type="GO" id="GO:0016020">
    <property type="term" value="C:membrane"/>
    <property type="evidence" value="ECO:0007669"/>
    <property type="project" value="UniProtKB-SubCell"/>
</dbReference>
<dbReference type="GO" id="GO:0043227">
    <property type="term" value="C:membrane-bounded organelle"/>
    <property type="evidence" value="ECO:0000314"/>
    <property type="project" value="UniProtKB"/>
</dbReference>
<dbReference type="GO" id="GO:1990742">
    <property type="term" value="C:microvesicle"/>
    <property type="evidence" value="ECO:0007669"/>
    <property type="project" value="Ensembl"/>
</dbReference>
<dbReference type="GO" id="GO:0098793">
    <property type="term" value="C:presynapse"/>
    <property type="evidence" value="ECO:0007669"/>
    <property type="project" value="GOC"/>
</dbReference>
<dbReference type="GO" id="GO:0001726">
    <property type="term" value="C:ruffle"/>
    <property type="evidence" value="ECO:0007669"/>
    <property type="project" value="Ensembl"/>
</dbReference>
<dbReference type="GO" id="GO:0001725">
    <property type="term" value="C:stress fiber"/>
    <property type="evidence" value="ECO:0007669"/>
    <property type="project" value="Ensembl"/>
</dbReference>
<dbReference type="GO" id="GO:0030133">
    <property type="term" value="C:transport vesicle"/>
    <property type="evidence" value="ECO:0000314"/>
    <property type="project" value="UniProtKB"/>
</dbReference>
<dbReference type="GO" id="GO:0051015">
    <property type="term" value="F:actin filament binding"/>
    <property type="evidence" value="ECO:0000314"/>
    <property type="project" value="UniProtKB"/>
</dbReference>
<dbReference type="GO" id="GO:0042802">
    <property type="term" value="F:identical protein binding"/>
    <property type="evidence" value="ECO:0000353"/>
    <property type="project" value="IntAct"/>
</dbReference>
<dbReference type="GO" id="GO:0060090">
    <property type="term" value="F:molecular adaptor activity"/>
    <property type="evidence" value="ECO:0007669"/>
    <property type="project" value="Ensembl"/>
</dbReference>
<dbReference type="GO" id="GO:0042803">
    <property type="term" value="F:protein homodimerization activity"/>
    <property type="evidence" value="ECO:0000314"/>
    <property type="project" value="UniProtKB"/>
</dbReference>
<dbReference type="GO" id="GO:0019905">
    <property type="term" value="F:syntaxin binding"/>
    <property type="evidence" value="ECO:0000304"/>
    <property type="project" value="UniProtKB"/>
</dbReference>
<dbReference type="GO" id="GO:0051017">
    <property type="term" value="P:actin filament bundle assembly"/>
    <property type="evidence" value="ECO:0007669"/>
    <property type="project" value="Ensembl"/>
</dbReference>
<dbReference type="GO" id="GO:0046085">
    <property type="term" value="P:adenosine metabolic process"/>
    <property type="evidence" value="ECO:0007669"/>
    <property type="project" value="Ensembl"/>
</dbReference>
<dbReference type="GO" id="GO:0008089">
    <property type="term" value="P:anterograde axonal transport"/>
    <property type="evidence" value="ECO:0000250"/>
    <property type="project" value="UniProtKB"/>
</dbReference>
<dbReference type="GO" id="GO:0048490">
    <property type="term" value="P:anterograde synaptic vesicle transport"/>
    <property type="evidence" value="ECO:0000250"/>
    <property type="project" value="UniProtKB"/>
</dbReference>
<dbReference type="GO" id="GO:0046034">
    <property type="term" value="P:ATP metabolic process"/>
    <property type="evidence" value="ECO:0007669"/>
    <property type="project" value="Ensembl"/>
</dbReference>
<dbReference type="GO" id="GO:0007596">
    <property type="term" value="P:blood coagulation"/>
    <property type="evidence" value="ECO:0007669"/>
    <property type="project" value="Ensembl"/>
</dbReference>
<dbReference type="GO" id="GO:0002936">
    <property type="term" value="P:bradykinin biosynthetic process"/>
    <property type="evidence" value="ECO:0007669"/>
    <property type="project" value="Ensembl"/>
</dbReference>
<dbReference type="GO" id="GO:0071364">
    <property type="term" value="P:cellular response to epidermal growth factor stimulus"/>
    <property type="evidence" value="ECO:0007669"/>
    <property type="project" value="Ensembl"/>
</dbReference>
<dbReference type="GO" id="GO:0060271">
    <property type="term" value="P:cilium assembly"/>
    <property type="evidence" value="ECO:0007669"/>
    <property type="project" value="Ensembl"/>
</dbReference>
<dbReference type="GO" id="GO:0042745">
    <property type="term" value="P:circadian sleep/wake cycle"/>
    <property type="evidence" value="ECO:0007669"/>
    <property type="project" value="Ensembl"/>
</dbReference>
<dbReference type="GO" id="GO:0021542">
    <property type="term" value="P:dentate gyrus development"/>
    <property type="evidence" value="ECO:0007669"/>
    <property type="project" value="Ensembl"/>
</dbReference>
<dbReference type="GO" id="GO:0035646">
    <property type="term" value="P:endosome to melanosome transport"/>
    <property type="evidence" value="ECO:0000314"/>
    <property type="project" value="UniProtKB"/>
</dbReference>
<dbReference type="GO" id="GO:0003158">
    <property type="term" value="P:endothelium development"/>
    <property type="evidence" value="ECO:0007669"/>
    <property type="project" value="Ensembl"/>
</dbReference>
<dbReference type="GO" id="GO:0010467">
    <property type="term" value="P:gene expression"/>
    <property type="evidence" value="ECO:0007669"/>
    <property type="project" value="Ensembl"/>
</dbReference>
<dbReference type="GO" id="GO:0006536">
    <property type="term" value="P:glutamate metabolic process"/>
    <property type="evidence" value="ECO:0007669"/>
    <property type="project" value="Ensembl"/>
</dbReference>
<dbReference type="GO" id="GO:0006541">
    <property type="term" value="P:glutamine metabolic process"/>
    <property type="evidence" value="ECO:0007669"/>
    <property type="project" value="Ensembl"/>
</dbReference>
<dbReference type="GO" id="GO:0048872">
    <property type="term" value="P:homeostasis of number of cells"/>
    <property type="evidence" value="ECO:0007669"/>
    <property type="project" value="Ensembl"/>
</dbReference>
<dbReference type="GO" id="GO:0021854">
    <property type="term" value="P:hypothalamus development"/>
    <property type="evidence" value="ECO:0007669"/>
    <property type="project" value="Ensembl"/>
</dbReference>
<dbReference type="GO" id="GO:0033484">
    <property type="term" value="P:intracellular nitric oxide homeostasis"/>
    <property type="evidence" value="ECO:0007669"/>
    <property type="project" value="Ensembl"/>
</dbReference>
<dbReference type="GO" id="GO:0046907">
    <property type="term" value="P:intracellular transport"/>
    <property type="evidence" value="ECO:0000318"/>
    <property type="project" value="GO_Central"/>
</dbReference>
<dbReference type="GO" id="GO:0001822">
    <property type="term" value="P:kidney development"/>
    <property type="evidence" value="ECO:0007669"/>
    <property type="project" value="Ensembl"/>
</dbReference>
<dbReference type="GO" id="GO:0055088">
    <property type="term" value="P:lipid homeostasis"/>
    <property type="evidence" value="ECO:0007669"/>
    <property type="project" value="Ensembl"/>
</dbReference>
<dbReference type="GO" id="GO:0048286">
    <property type="term" value="P:lung alveolus development"/>
    <property type="evidence" value="ECO:0007669"/>
    <property type="project" value="Ensembl"/>
</dbReference>
<dbReference type="GO" id="GO:0030318">
    <property type="term" value="P:melanocyte differentiation"/>
    <property type="evidence" value="ECO:0007669"/>
    <property type="project" value="Ensembl"/>
</dbReference>
<dbReference type="GO" id="GO:0032438">
    <property type="term" value="P:melanosome organization"/>
    <property type="evidence" value="ECO:0000303"/>
    <property type="project" value="UniProtKB"/>
</dbReference>
<dbReference type="GO" id="GO:0032402">
    <property type="term" value="P:melanosome transport"/>
    <property type="evidence" value="ECO:0000314"/>
    <property type="project" value="UniProtKB"/>
</dbReference>
<dbReference type="GO" id="GO:0061025">
    <property type="term" value="P:membrane fusion"/>
    <property type="evidence" value="ECO:0007669"/>
    <property type="project" value="Ensembl"/>
</dbReference>
<dbReference type="GO" id="GO:0007613">
    <property type="term" value="P:memory"/>
    <property type="evidence" value="ECO:0007669"/>
    <property type="project" value="Ensembl"/>
</dbReference>
<dbReference type="GO" id="GO:0035264">
    <property type="term" value="P:multicellular organism growth"/>
    <property type="evidence" value="ECO:0007669"/>
    <property type="project" value="Ensembl"/>
</dbReference>
<dbReference type="GO" id="GO:0031175">
    <property type="term" value="P:neuron projection development"/>
    <property type="evidence" value="ECO:0000250"/>
    <property type="project" value="UniProtKB"/>
</dbReference>
<dbReference type="GO" id="GO:0006644">
    <property type="term" value="P:phospholipid metabolic process"/>
    <property type="evidence" value="ECO:0007669"/>
    <property type="project" value="Ensembl"/>
</dbReference>
<dbReference type="GO" id="GO:0032816">
    <property type="term" value="P:positive regulation of natural killer cell activation"/>
    <property type="evidence" value="ECO:0007669"/>
    <property type="project" value="Ensembl"/>
</dbReference>
<dbReference type="GO" id="GO:0050942">
    <property type="term" value="P:positive regulation of pigment cell differentiation"/>
    <property type="evidence" value="ECO:0000314"/>
    <property type="project" value="UniProtKB"/>
</dbReference>
<dbReference type="GO" id="GO:0006605">
    <property type="term" value="P:protein targeting"/>
    <property type="evidence" value="ECO:0007669"/>
    <property type="project" value="Ensembl"/>
</dbReference>
<dbReference type="GO" id="GO:0071806">
    <property type="term" value="P:protein transmembrane transport"/>
    <property type="evidence" value="ECO:0007669"/>
    <property type="project" value="Ensembl"/>
</dbReference>
<dbReference type="GO" id="GO:0003016">
    <property type="term" value="P:respiratory system process"/>
    <property type="evidence" value="ECO:0007669"/>
    <property type="project" value="Ensembl"/>
</dbReference>
<dbReference type="GO" id="GO:1905144">
    <property type="term" value="P:response to acetylcholine"/>
    <property type="evidence" value="ECO:0007669"/>
    <property type="project" value="Ensembl"/>
</dbReference>
<dbReference type="GO" id="GO:0014823">
    <property type="term" value="P:response to activity"/>
    <property type="evidence" value="ECO:0007669"/>
    <property type="project" value="Ensembl"/>
</dbReference>
<dbReference type="GO" id="GO:0009410">
    <property type="term" value="P:response to xenobiotic stimulus"/>
    <property type="evidence" value="ECO:0007669"/>
    <property type="project" value="Ensembl"/>
</dbReference>
<dbReference type="GO" id="GO:0033299">
    <property type="term" value="P:secretion of lysosomal enzymes"/>
    <property type="evidence" value="ECO:0007669"/>
    <property type="project" value="Ensembl"/>
</dbReference>
<dbReference type="GO" id="GO:0016081">
    <property type="term" value="P:synaptic vesicle docking"/>
    <property type="evidence" value="ECO:0000303"/>
    <property type="project" value="UniProtKB"/>
</dbReference>
<dbReference type="GO" id="GO:0042311">
    <property type="term" value="P:vasodilation"/>
    <property type="evidence" value="ECO:0007669"/>
    <property type="project" value="Ensembl"/>
</dbReference>
<dbReference type="InterPro" id="IPR017242">
    <property type="entry name" value="BLOC-1_pallidin"/>
</dbReference>
<dbReference type="InterPro" id="IPR028119">
    <property type="entry name" value="Snapin/Pallidin/Snn1"/>
</dbReference>
<dbReference type="PANTHER" id="PTHR31328">
    <property type="entry name" value="BIOGENESIS OF LYSOSOME-RELATED ORGANELLES COMPLEX 1 SUBUNIT 6"/>
    <property type="match status" value="1"/>
</dbReference>
<dbReference type="PANTHER" id="PTHR31328:SF2">
    <property type="entry name" value="BIOGENESIS OF LYSOSOME-RELATED ORGANELLES COMPLEX 1 SUBUNIT 6"/>
    <property type="match status" value="1"/>
</dbReference>
<dbReference type="Pfam" id="PF14712">
    <property type="entry name" value="Snapin_Pallidin"/>
    <property type="match status" value="1"/>
</dbReference>
<dbReference type="PIRSF" id="PIRSF037609">
    <property type="entry name" value="BLOC-1_complex_pallidin"/>
    <property type="match status" value="1"/>
</dbReference>